<dbReference type="EC" id="3.5.4.2"/>
<dbReference type="EMBL" id="AE016877">
    <property type="protein sequence ID" value="AAP09959.1"/>
    <property type="molecule type" value="Genomic_DNA"/>
</dbReference>
<dbReference type="RefSeq" id="NP_832758.1">
    <property type="nucleotide sequence ID" value="NC_004722.1"/>
</dbReference>
<dbReference type="SMR" id="Q81BX6"/>
<dbReference type="STRING" id="226900.BC_3012"/>
<dbReference type="KEGG" id="bce:BC3012"/>
<dbReference type="PATRIC" id="fig|226900.8.peg.3088"/>
<dbReference type="HOGENOM" id="CLU_027935_0_0_9"/>
<dbReference type="Proteomes" id="UP000001417">
    <property type="component" value="Chromosome"/>
</dbReference>
<dbReference type="GO" id="GO:0000034">
    <property type="term" value="F:adenine deaminase activity"/>
    <property type="evidence" value="ECO:0000318"/>
    <property type="project" value="GO_Central"/>
</dbReference>
<dbReference type="GO" id="GO:0006146">
    <property type="term" value="P:adenine catabolic process"/>
    <property type="evidence" value="ECO:0007669"/>
    <property type="project" value="InterPro"/>
</dbReference>
<dbReference type="CDD" id="cd01295">
    <property type="entry name" value="AdeC"/>
    <property type="match status" value="1"/>
</dbReference>
<dbReference type="FunFam" id="3.20.20.140:FF:000067">
    <property type="entry name" value="Adenine deaminase"/>
    <property type="match status" value="1"/>
</dbReference>
<dbReference type="Gene3D" id="3.20.20.140">
    <property type="entry name" value="Metal-dependent hydrolases"/>
    <property type="match status" value="1"/>
</dbReference>
<dbReference type="Gene3D" id="2.30.40.10">
    <property type="entry name" value="Urease, subunit C, domain 1"/>
    <property type="match status" value="1"/>
</dbReference>
<dbReference type="InterPro" id="IPR006679">
    <property type="entry name" value="Adenine_deam"/>
</dbReference>
<dbReference type="InterPro" id="IPR026912">
    <property type="entry name" value="Adenine_deam_C"/>
</dbReference>
<dbReference type="InterPro" id="IPR006680">
    <property type="entry name" value="Amidohydro-rel"/>
</dbReference>
<dbReference type="InterPro" id="IPR011059">
    <property type="entry name" value="Metal-dep_hydrolase_composite"/>
</dbReference>
<dbReference type="InterPro" id="IPR032466">
    <property type="entry name" value="Metal_Hydrolase"/>
</dbReference>
<dbReference type="PANTHER" id="PTHR11113:SF6">
    <property type="entry name" value="ADENINE DEAMINASE YERA-RELATED"/>
    <property type="match status" value="1"/>
</dbReference>
<dbReference type="PANTHER" id="PTHR11113">
    <property type="entry name" value="N-ACETYLGLUCOSAMINE-6-PHOSPHATE DEACETYLASE"/>
    <property type="match status" value="1"/>
</dbReference>
<dbReference type="Pfam" id="PF13382">
    <property type="entry name" value="Adenine_deam_C"/>
    <property type="match status" value="1"/>
</dbReference>
<dbReference type="Pfam" id="PF01979">
    <property type="entry name" value="Amidohydro_1"/>
    <property type="match status" value="1"/>
</dbReference>
<dbReference type="SUPFAM" id="SSF51338">
    <property type="entry name" value="Composite domain of metallo-dependent hydrolases"/>
    <property type="match status" value="1"/>
</dbReference>
<dbReference type="SUPFAM" id="SSF51556">
    <property type="entry name" value="Metallo-dependent hydrolases"/>
    <property type="match status" value="1"/>
</dbReference>
<comment type="catalytic activity">
    <reaction>
        <text>adenine + H2O + H(+) = hypoxanthine + NH4(+)</text>
        <dbReference type="Rhea" id="RHEA:23688"/>
        <dbReference type="ChEBI" id="CHEBI:15377"/>
        <dbReference type="ChEBI" id="CHEBI:15378"/>
        <dbReference type="ChEBI" id="CHEBI:16708"/>
        <dbReference type="ChEBI" id="CHEBI:17368"/>
        <dbReference type="ChEBI" id="CHEBI:28938"/>
        <dbReference type="EC" id="3.5.4.2"/>
    </reaction>
</comment>
<comment type="similarity">
    <text evidence="1">Belongs to the metallo-dependent hydrolases superfamily. Adenine deaminase family.</text>
</comment>
<feature type="chain" id="PRO_0000142445" description="Putative adenine deaminase BC_3012">
    <location>
        <begin position="1"/>
        <end position="589"/>
    </location>
</feature>
<evidence type="ECO:0000305" key="1"/>
<name>Y3012_BACCR</name>
<keyword id="KW-0378">Hydrolase</keyword>
<keyword id="KW-1185">Reference proteome</keyword>
<organism>
    <name type="scientific">Bacillus cereus (strain ATCC 14579 / DSM 31 / CCUG 7414 / JCM 2152 / NBRC 15305 / NCIMB 9373 / NCTC 2599 / NRRL B-3711)</name>
    <dbReference type="NCBI Taxonomy" id="226900"/>
    <lineage>
        <taxon>Bacteria</taxon>
        <taxon>Bacillati</taxon>
        <taxon>Bacillota</taxon>
        <taxon>Bacilli</taxon>
        <taxon>Bacillales</taxon>
        <taxon>Bacillaceae</taxon>
        <taxon>Bacillus</taxon>
        <taxon>Bacillus cereus group</taxon>
    </lineage>
</organism>
<accession>Q81BX6</accession>
<gene>
    <name type="ordered locus">BC_3012</name>
</gene>
<reference key="1">
    <citation type="journal article" date="2003" name="Nature">
        <title>Genome sequence of Bacillus cereus and comparative analysis with Bacillus anthracis.</title>
        <authorList>
            <person name="Ivanova N."/>
            <person name="Sorokin A."/>
            <person name="Anderson I."/>
            <person name="Galleron N."/>
            <person name="Candelon B."/>
            <person name="Kapatral V."/>
            <person name="Bhattacharyya A."/>
            <person name="Reznik G."/>
            <person name="Mikhailova N."/>
            <person name="Lapidus A."/>
            <person name="Chu L."/>
            <person name="Mazur M."/>
            <person name="Goltsman E."/>
            <person name="Larsen N."/>
            <person name="D'Souza M."/>
            <person name="Walunas T."/>
            <person name="Grechkin Y."/>
            <person name="Pusch G."/>
            <person name="Haselkorn R."/>
            <person name="Fonstein M."/>
            <person name="Ehrlich S.D."/>
            <person name="Overbeek R."/>
            <person name="Kyrpides N.C."/>
        </authorList>
    </citation>
    <scope>NUCLEOTIDE SEQUENCE [LARGE SCALE GENOMIC DNA]</scope>
    <source>
        <strain>ATCC 14579 / DSM 31 / CCUG 7414 / JCM 2152 / NBRC 15305 / NCIMB 9373 / NCTC 2599 / NRRL B-3711</strain>
    </source>
</reference>
<sequence>MELNTMGKNHYKWSNKQLREHVEVLDGKRSTHILLKNATYLNSYMREWMTANIWIYNDRIVYVGEQLPEQLTECEVVDCEGKYVVPGYIEPHAHPYQLYNPETLANHAMQFGTTTFINDNLTLFFTLKREEAFRLLDEFNKIPASMYWWCRFDGQTELQNGESLFNSEEIIEWLQHEAVLQGGELTAWPKLLHGDDEMLTWVQETKRLQKKVEGHFPGASETTLAKLKLLGTDCDHEAMTGQEAFTRLMQGYTVSLRNSSIRPDLEVILKELLELGVKQFDRFFFTTDGSHPSFYENGMTNVMISTAIKQGVPVIDAYDMASYNIARYYNMEHVHGSIATGRIANINILESKENPVPISVLAKGKWVKRDGVNTHEALHIDWSKHKVTPLSLDWSIEKEDMIFSNKTGIHLLNNVITKPYTSEINIDCDELSTDHDECFFMMIARDGSWQVNIAVKGFAKELGGLASSYSGTGDIILIGKRKEDMLTAFRRVKELGGGMVIAEKNEVLHEIALPLLGIMSNLKMRELIQEEKQMVKLLQERGYAHDDPAFTILFFSATHLPFIRVTPIGLYDVKSSKVVAPPVNLIKQY</sequence>
<proteinExistence type="inferred from homology"/>
<protein>
    <recommendedName>
        <fullName>Putative adenine deaminase BC_3012</fullName>
        <shortName>Adenase</shortName>
        <shortName>Adenine aminase</shortName>
        <ecNumber>3.5.4.2</ecNumber>
    </recommendedName>
</protein>